<keyword id="KW-0004">4Fe-4S</keyword>
<keyword id="KW-0051">Antiviral defense</keyword>
<keyword id="KW-0408">Iron</keyword>
<keyword id="KW-0411">Iron-sulfur</keyword>
<keyword id="KW-0456">Lyase</keyword>
<keyword id="KW-0479">Metal-binding</keyword>
<keyword id="KW-0949">S-adenosyl-L-methionine</keyword>
<reference evidence="8" key="1">
    <citation type="submission" date="2016-10" db="EMBL/GenBank/DDBJ databases">
        <authorList>
            <person name="Varghese N."/>
        </authorList>
    </citation>
    <scope>NUCLEOTIDE SEQUENCE [LARGE SCALE GENOMIC DNA]</scope>
    <source>
        <strain>S137</strain>
    </source>
</reference>
<reference key="2">
    <citation type="journal article" date="2021" name="Nature">
        <title>Prokaryotic viperins produce diverse antiviral molecules.</title>
        <authorList>
            <person name="Bernheim A."/>
            <person name="Millman A."/>
            <person name="Ofir G."/>
            <person name="Meitav G."/>
            <person name="Avraham C."/>
            <person name="Shomar H."/>
            <person name="Rosenberg M.M."/>
            <person name="Tal N."/>
            <person name="Melamed S."/>
            <person name="Amitai G."/>
            <person name="Sorek R."/>
        </authorList>
    </citation>
    <scope>FUNCTION IN ANTIVIRAL DEFENSE</scope>
    <scope>FUNCTION IN DDHCTP SYNTHESIS</scope>
    <scope>CATALYTIC ACTIVITY</scope>
    <source>
        <strain>S137</strain>
    </source>
</reference>
<reference key="3">
    <citation type="journal article" date="2022" name="Front. Mol. Biosci.">
        <title>Radical-SAM dependent nucleotide dehydratase (SAND), rectification of the names of an ancient iron-sulfur enzyme using NC-IUBMB recommendations.</title>
        <authorList>
            <person name="Ji Y."/>
            <person name="Wei L."/>
            <person name="Da A."/>
            <person name="Stark H."/>
            <person name="Hagedoorn P.-L."/>
            <person name="Ciofi-Baffoni S."/>
            <person name="Cowley S.A."/>
            <person name="Louro R.O."/>
            <person name="Todorovic S."/>
            <person name="Mroginski M.A."/>
            <person name="Nicolet Y."/>
            <person name="Roessler M.M."/>
            <person name="Le Brun N.E."/>
            <person name="Piccioli M."/>
            <person name="James W.S."/>
            <person name="Hagen W.R."/>
            <person name="Ebrahimi K.H."/>
        </authorList>
    </citation>
    <scope>NOMENCLATURE</scope>
</reference>
<comment type="function">
    <text evidence="1 3">Expression of pVip6 in E.coli (strain MG1655) confers resistance to phages lambda, P1, SECphi6, SECphi8 and T7. Catalyzes the conversion of cytidine triphosphate (CTP) to 3'-deoxy-3',4'-didehydro-CTP (ddhCTP), probably via a SAM-dependent radical mechanism (PubMed:32937646). The modified nucleotide represses transcription from T7 RNA polymerase-directed genes (possibly by acting as chain terminators), strongly suggesting these nucleotides block viral polymerase transcription (By similarity).</text>
</comment>
<comment type="catalytic activity">
    <reaction evidence="3">
        <text>CTP + AH2 + S-adenosyl-L-methionine = 3'-deoxy-3',4'-didehydro-CTP + 5'-deoxyadenosine + L-methionine + A + H2O + H(+)</text>
        <dbReference type="Rhea" id="RHEA:65944"/>
        <dbReference type="ChEBI" id="CHEBI:13193"/>
        <dbReference type="ChEBI" id="CHEBI:15377"/>
        <dbReference type="ChEBI" id="CHEBI:15378"/>
        <dbReference type="ChEBI" id="CHEBI:17319"/>
        <dbReference type="ChEBI" id="CHEBI:17499"/>
        <dbReference type="ChEBI" id="CHEBI:37563"/>
        <dbReference type="ChEBI" id="CHEBI:57844"/>
        <dbReference type="ChEBI" id="CHEBI:59789"/>
        <dbReference type="ChEBI" id="CHEBI:166821"/>
    </reaction>
    <physiologicalReaction direction="left-to-right" evidence="3">
        <dbReference type="Rhea" id="RHEA:65945"/>
    </physiologicalReaction>
</comment>
<comment type="cofactor">
    <cofactor evidence="2">
        <name>[4Fe-4S] cluster</name>
        <dbReference type="ChEBI" id="CHEBI:49883"/>
    </cofactor>
</comment>
<comment type="miscellaneous">
    <text evidence="7">How this protein allows bacteria to resist viruses that do not encode their own RNA polymerase (such as lambda, P1) is unknown.</text>
</comment>
<comment type="similarity">
    <text evidence="7">Belongs to the radical SAM superfamily. Prokaryotic viperin family.</text>
</comment>
<feature type="chain" id="PRO_0000456417" description="S-adenosylmethionine-dependent nucleotide dehydratase">
    <location>
        <begin position="1"/>
        <end position="274"/>
    </location>
</feature>
<feature type="domain" description="Radical SAM core" evidence="2">
    <location>
        <begin position="1"/>
        <end position="215"/>
    </location>
</feature>
<feature type="binding site" evidence="2">
    <location>
        <position position="13"/>
    </location>
    <ligand>
        <name>[4Fe-4S] cluster</name>
        <dbReference type="ChEBI" id="CHEBI:49883"/>
        <note>4Fe-4S-S-AdoMet</note>
    </ligand>
</feature>
<feature type="binding site" evidence="2">
    <location>
        <position position="17"/>
    </location>
    <ligand>
        <name>[4Fe-4S] cluster</name>
        <dbReference type="ChEBI" id="CHEBI:49883"/>
        <note>4Fe-4S-S-AdoMet</note>
    </ligand>
</feature>
<feature type="binding site" evidence="2">
    <location>
        <position position="20"/>
    </location>
    <ligand>
        <name>[4Fe-4S] cluster</name>
        <dbReference type="ChEBI" id="CHEBI:49883"/>
        <note>4Fe-4S-S-AdoMet</note>
    </ligand>
</feature>
<gene>
    <name evidence="6" type="primary">vip6</name>
    <name type="ORF">Ga0066891_103114</name>
    <name evidence="8" type="ORF">SAMN05216366_103114</name>
</gene>
<name>SAND_SELRU</name>
<organism>
    <name type="scientific">Selenomonas ruminantium</name>
    <dbReference type="NCBI Taxonomy" id="971"/>
    <lineage>
        <taxon>Bacteria</taxon>
        <taxon>Bacillati</taxon>
        <taxon>Bacillota</taxon>
        <taxon>Negativicutes</taxon>
        <taxon>Selenomonadales</taxon>
        <taxon>Selenomonadaceae</taxon>
        <taxon>Selenomonas</taxon>
    </lineage>
</organism>
<protein>
    <recommendedName>
        <fullName evidence="5">S-adenosylmethionine-dependent nucleotide dehydratase</fullName>
        <shortName evidence="5">SAND</shortName>
        <ecNumber evidence="3">4.2.-.-</ecNumber>
    </recommendedName>
    <alternativeName>
        <fullName evidence="4">Prokaryotic viperin protein pVip6</fullName>
        <shortName evidence="4">pVip6</shortName>
    </alternativeName>
</protein>
<accession>A0A1H0NKS3</accession>
<evidence type="ECO:0000250" key="1">
    <source>
        <dbReference type="UniProtKB" id="P0DW53"/>
    </source>
</evidence>
<evidence type="ECO:0000255" key="2">
    <source>
        <dbReference type="PROSITE-ProRule" id="PRU01266"/>
    </source>
</evidence>
<evidence type="ECO:0000269" key="3">
    <source>
    </source>
</evidence>
<evidence type="ECO:0000303" key="4">
    <source>
    </source>
</evidence>
<evidence type="ECO:0000303" key="5">
    <source>
    </source>
</evidence>
<evidence type="ECO:0000305" key="6"/>
<evidence type="ECO:0000305" key="7">
    <source>
    </source>
</evidence>
<evidence type="ECO:0000312" key="8">
    <source>
        <dbReference type="EMBL" id="SDO93241.1"/>
    </source>
</evidence>
<dbReference type="EC" id="4.2.-.-" evidence="3"/>
<dbReference type="EMBL" id="FNJQ01000003">
    <property type="protein sequence ID" value="SDO93241.1"/>
    <property type="molecule type" value="Genomic_DNA"/>
</dbReference>
<dbReference type="RefSeq" id="WP_074571316.1">
    <property type="nucleotide sequence ID" value="NZ_FNJQ01000003.1"/>
</dbReference>
<dbReference type="SMR" id="A0A1H0NKS3"/>
<dbReference type="OrthoDB" id="9808591at2"/>
<dbReference type="Proteomes" id="UP000182412">
    <property type="component" value="Unassembled WGS sequence"/>
</dbReference>
<dbReference type="GO" id="GO:0051539">
    <property type="term" value="F:4 iron, 4 sulfur cluster binding"/>
    <property type="evidence" value="ECO:0007669"/>
    <property type="project" value="UniProtKB-KW"/>
</dbReference>
<dbReference type="GO" id="GO:0016829">
    <property type="term" value="F:lyase activity"/>
    <property type="evidence" value="ECO:0007669"/>
    <property type="project" value="UniProtKB-KW"/>
</dbReference>
<dbReference type="GO" id="GO:0046872">
    <property type="term" value="F:metal ion binding"/>
    <property type="evidence" value="ECO:0007669"/>
    <property type="project" value="UniProtKB-KW"/>
</dbReference>
<dbReference type="GO" id="GO:0051607">
    <property type="term" value="P:defense response to virus"/>
    <property type="evidence" value="ECO:0007669"/>
    <property type="project" value="UniProtKB-KW"/>
</dbReference>
<dbReference type="CDD" id="cd01335">
    <property type="entry name" value="Radical_SAM"/>
    <property type="match status" value="1"/>
</dbReference>
<dbReference type="Gene3D" id="3.20.20.70">
    <property type="entry name" value="Aldolase class I"/>
    <property type="match status" value="1"/>
</dbReference>
<dbReference type="InterPro" id="IPR013785">
    <property type="entry name" value="Aldolase_TIM"/>
</dbReference>
<dbReference type="InterPro" id="IPR051196">
    <property type="entry name" value="RSAD2/Viperin_antiviral"/>
</dbReference>
<dbReference type="InterPro" id="IPR007197">
    <property type="entry name" value="rSAM"/>
</dbReference>
<dbReference type="NCBIfam" id="NF038283">
    <property type="entry name" value="viperin_w_prok"/>
    <property type="match status" value="1"/>
</dbReference>
<dbReference type="PANTHER" id="PTHR21339">
    <property type="entry name" value="RADICAL S-ADENOSYL METHIONINE DOMAIN-CONTAINING PROTEIN 2"/>
    <property type="match status" value="1"/>
</dbReference>
<dbReference type="PANTHER" id="PTHR21339:SF0">
    <property type="entry name" value="S-ADENOSYLMETHIONINE-DEPENDENT NUCLEOTIDE DEHYDRATASE RSAD2"/>
    <property type="match status" value="1"/>
</dbReference>
<dbReference type="Pfam" id="PF13353">
    <property type="entry name" value="Fer4_12"/>
    <property type="match status" value="1"/>
</dbReference>
<dbReference type="Pfam" id="PF04055">
    <property type="entry name" value="Radical_SAM"/>
    <property type="match status" value="1"/>
</dbReference>
<dbReference type="SFLD" id="SFLDS00029">
    <property type="entry name" value="Radical_SAM"/>
    <property type="match status" value="1"/>
</dbReference>
<dbReference type="SFLD" id="SFLDG01067">
    <property type="entry name" value="SPASM/twitch_domain_containing"/>
    <property type="match status" value="1"/>
</dbReference>
<dbReference type="SUPFAM" id="SSF102114">
    <property type="entry name" value="Radical SAM enzymes"/>
    <property type="match status" value="1"/>
</dbReference>
<dbReference type="PROSITE" id="PS51918">
    <property type="entry name" value="RADICAL_SAM"/>
    <property type="match status" value="1"/>
</dbReference>
<sequence length="274" mass="30933">MAYKVNLHITQKCNYACKYCFAHFDHHNDLTLGQWKHIIDNLKTSGLVDAINFAGGEPVLHRDFAAIVNYAYDQGFKLSIITNGSLMLNPKLMPPELFAKFDTLGISVDSINPKTLIALGACNNSQEVLSYDKLSHLITLARSVNPTIRIKLNTVITNLNADEDLTIIGQELDIARWKMLRMKLFIHEGFNNAPLLVSQADFDGFVERHAEVSHDIVPENDLTRSYIMVDNQGRLLDDETEEYKVVGSLLAEDFGTVFDRYHFDEATYASRYAG</sequence>
<proteinExistence type="evidence at protein level"/>